<accession>A4IF78</accession>
<reference key="1">
    <citation type="submission" date="2007-03" db="EMBL/GenBank/DDBJ databases">
        <authorList>
            <consortium name="NIH - Mammalian Gene Collection (MGC) project"/>
        </authorList>
    </citation>
    <scope>NUCLEOTIDE SEQUENCE [LARGE SCALE MRNA]</scope>
    <source>
        <strain>Hereford</strain>
        <tissue>Thymus</tissue>
    </source>
</reference>
<dbReference type="EMBL" id="BC134442">
    <property type="protein sequence ID" value="AAI34443.1"/>
    <property type="molecule type" value="mRNA"/>
</dbReference>
<dbReference type="RefSeq" id="NP_001077180.1">
    <property type="nucleotide sequence ID" value="NM_001083711.3"/>
</dbReference>
<dbReference type="SMR" id="A4IF78"/>
<dbReference type="FunCoup" id="A4IF78">
    <property type="interactions" value="1087"/>
</dbReference>
<dbReference type="STRING" id="9913.ENSBTAP00000019342"/>
<dbReference type="PaxDb" id="9913-ENSBTAP00000019342"/>
<dbReference type="GeneID" id="529336"/>
<dbReference type="KEGG" id="bta:529336"/>
<dbReference type="CTD" id="25816"/>
<dbReference type="VEuPathDB" id="HostDB:ENSBTAG00000014551"/>
<dbReference type="eggNOG" id="ENOG502S00N">
    <property type="taxonomic scope" value="Eukaryota"/>
</dbReference>
<dbReference type="HOGENOM" id="CLU_085918_1_0_1"/>
<dbReference type="InParanoid" id="A4IF78"/>
<dbReference type="OMA" id="QDRCDQV"/>
<dbReference type="OrthoDB" id="10055976at2759"/>
<dbReference type="TreeFam" id="TF323415"/>
<dbReference type="Reactome" id="R-BTA-1483255">
    <property type="pathway name" value="PI Metabolism"/>
</dbReference>
<dbReference type="Proteomes" id="UP000009136">
    <property type="component" value="Chromosome 7"/>
</dbReference>
<dbReference type="Bgee" id="ENSBTAG00000014551">
    <property type="expression patterns" value="Expressed in abdominal lymph node and 106 other cell types or tissues"/>
</dbReference>
<dbReference type="GO" id="GO:0005737">
    <property type="term" value="C:cytoplasm"/>
    <property type="evidence" value="ECO:0000318"/>
    <property type="project" value="GO_Central"/>
</dbReference>
<dbReference type="GO" id="GO:0043027">
    <property type="term" value="F:cysteine-type endopeptidase inhibitor activity involved in apoptotic process"/>
    <property type="evidence" value="ECO:0000318"/>
    <property type="project" value="GO_Central"/>
</dbReference>
<dbReference type="GO" id="GO:0006915">
    <property type="term" value="P:apoptotic process"/>
    <property type="evidence" value="ECO:0007669"/>
    <property type="project" value="UniProtKB-KW"/>
</dbReference>
<dbReference type="GO" id="GO:0042981">
    <property type="term" value="P:regulation of apoptotic process"/>
    <property type="evidence" value="ECO:0007669"/>
    <property type="project" value="InterPro"/>
</dbReference>
<dbReference type="FunFam" id="1.20.1440.160:FF:000001">
    <property type="entry name" value="Tumor necrosis factor alpha-induced protein 8-like 1"/>
    <property type="match status" value="1"/>
</dbReference>
<dbReference type="Gene3D" id="1.20.1440.160">
    <property type="entry name" value="Tumor necrosis factor alpha-induced protein 8-like"/>
    <property type="match status" value="1"/>
</dbReference>
<dbReference type="InterPro" id="IPR008477">
    <property type="entry name" value="TNFAIP8-like"/>
</dbReference>
<dbReference type="InterPro" id="IPR038355">
    <property type="entry name" value="TNFAIP8_sf"/>
</dbReference>
<dbReference type="PANTHER" id="PTHR12757:SF3">
    <property type="entry name" value="TUMOR NECROSIS FACTOR ALPHA-INDUCED PROTEIN 8"/>
    <property type="match status" value="1"/>
</dbReference>
<dbReference type="PANTHER" id="PTHR12757">
    <property type="entry name" value="TUMOR NECROSIS FACTOR INDUCED PROTEIN"/>
    <property type="match status" value="1"/>
</dbReference>
<dbReference type="Pfam" id="PF05527">
    <property type="entry name" value="DUF758"/>
    <property type="match status" value="1"/>
</dbReference>
<keyword id="KW-0053">Apoptosis</keyword>
<keyword id="KW-0175">Coiled coil</keyword>
<keyword id="KW-0963">Cytoplasm</keyword>
<keyword id="KW-1185">Reference proteome</keyword>
<sequence length="198" mass="22995">MHFEAEESKEVATDVFNSKNLAVQAQKKILGKMASKSIATTLIDDTSSEVLDELYRVTKEYTQNKKEAEKIIKNLIKTVIKLAILYRNNQFNQDELALMEKFKKKVHQLAMTVVSFHQVDFTFDRNVLSKLLNECREMLHQIIQRHLTTKSHGRVNNVFDHFSDCDFLAALYNPFGNYKPHLQKLCDGINKMLDEENI</sequence>
<feature type="chain" id="PRO_0000331428" description="Tumor necrosis factor alpha-induced protein 8">
    <location>
        <begin position="1"/>
        <end position="198"/>
    </location>
</feature>
<feature type="coiled-coil region" evidence="2">
    <location>
        <begin position="49"/>
        <end position="83"/>
    </location>
</feature>
<protein>
    <recommendedName>
        <fullName>Tumor necrosis factor alpha-induced protein 8</fullName>
        <shortName>TNF alpha-induced protein 8</shortName>
    </recommendedName>
</protein>
<proteinExistence type="evidence at transcript level"/>
<comment type="function">
    <text evidence="1">Acts as a negative mediator of apoptosis. Suppresses the TNF-mediated apoptosis by inhibiting caspase-8 activity but not the processing of procaspase-8, subsequently resulting in inhibition of BID cleavage and caspase-3 activation (By similarity).</text>
</comment>
<comment type="subcellular location">
    <subcellularLocation>
        <location evidence="1">Cytoplasm</location>
    </subcellularLocation>
</comment>
<comment type="similarity">
    <text evidence="3">Belongs to the TNFAIP8 family.</text>
</comment>
<evidence type="ECO:0000250" key="1"/>
<evidence type="ECO:0000255" key="2"/>
<evidence type="ECO:0000305" key="3"/>
<name>TFIP8_BOVIN</name>
<gene>
    <name type="primary">TNFAIP8</name>
</gene>
<organism>
    <name type="scientific">Bos taurus</name>
    <name type="common">Bovine</name>
    <dbReference type="NCBI Taxonomy" id="9913"/>
    <lineage>
        <taxon>Eukaryota</taxon>
        <taxon>Metazoa</taxon>
        <taxon>Chordata</taxon>
        <taxon>Craniata</taxon>
        <taxon>Vertebrata</taxon>
        <taxon>Euteleostomi</taxon>
        <taxon>Mammalia</taxon>
        <taxon>Eutheria</taxon>
        <taxon>Laurasiatheria</taxon>
        <taxon>Artiodactyla</taxon>
        <taxon>Ruminantia</taxon>
        <taxon>Pecora</taxon>
        <taxon>Bovidae</taxon>
        <taxon>Bovinae</taxon>
        <taxon>Bos</taxon>
    </lineage>
</organism>